<name>PRL_CARAU</name>
<proteinExistence type="evidence at transcript level"/>
<organism>
    <name type="scientific">Carassius auratus</name>
    <name type="common">Goldfish</name>
    <dbReference type="NCBI Taxonomy" id="7957"/>
    <lineage>
        <taxon>Eukaryota</taxon>
        <taxon>Metazoa</taxon>
        <taxon>Chordata</taxon>
        <taxon>Craniata</taxon>
        <taxon>Vertebrata</taxon>
        <taxon>Euteleostomi</taxon>
        <taxon>Actinopterygii</taxon>
        <taxon>Neopterygii</taxon>
        <taxon>Teleostei</taxon>
        <taxon>Ostariophysi</taxon>
        <taxon>Cypriniformes</taxon>
        <taxon>Cyprinidae</taxon>
        <taxon>Cyprininae</taxon>
        <taxon>Carassius</taxon>
    </lineage>
</organism>
<keyword id="KW-1015">Disulfide bond</keyword>
<keyword id="KW-0372">Hormone</keyword>
<keyword id="KW-1185">Reference proteome</keyword>
<keyword id="KW-0964">Secreted</keyword>
<keyword id="KW-0732">Signal</keyword>
<sequence length="210" mass="23288">MTQGSRLYFAVAVLMCGFVSINGVGLNDLLERASQLSDKLHSLSTSLTNDLDSHFPPVGRVMMPRPSMCHTSSLQIPNDKDQALKVPEDELLSLARSLLLAWSDPLALLSSEASSLAHPERNTIDSKTKELQDNINSLGAGLEHVFNKMDSTSDNLSSLPFDINSLGQDKTSRLVNFHFLLSCFRRDSHKIDSFLKVLRCRAAKKRPEMC</sequence>
<dbReference type="EMBL" id="S82220">
    <property type="protein sequence ID" value="AAB47156.1"/>
    <property type="molecule type" value="mRNA"/>
</dbReference>
<dbReference type="EMBL" id="S82197">
    <property type="protein sequence ID" value="AAB47155.1"/>
    <property type="molecule type" value="mRNA"/>
</dbReference>
<dbReference type="PIR" id="S71486">
    <property type="entry name" value="S71486"/>
</dbReference>
<dbReference type="SMR" id="P87495"/>
<dbReference type="Proteomes" id="UP000515129">
    <property type="component" value="Unplaced"/>
</dbReference>
<dbReference type="GO" id="GO:0005615">
    <property type="term" value="C:extracellular space"/>
    <property type="evidence" value="ECO:0007669"/>
    <property type="project" value="TreeGrafter"/>
</dbReference>
<dbReference type="GO" id="GO:0005179">
    <property type="term" value="F:hormone activity"/>
    <property type="evidence" value="ECO:0007669"/>
    <property type="project" value="UniProtKB-KW"/>
</dbReference>
<dbReference type="GO" id="GO:0008284">
    <property type="term" value="P:positive regulation of cell population proliferation"/>
    <property type="evidence" value="ECO:0007669"/>
    <property type="project" value="TreeGrafter"/>
</dbReference>
<dbReference type="GO" id="GO:0046427">
    <property type="term" value="P:positive regulation of receptor signaling pathway via JAK-STAT"/>
    <property type="evidence" value="ECO:0007669"/>
    <property type="project" value="TreeGrafter"/>
</dbReference>
<dbReference type="GO" id="GO:0031667">
    <property type="term" value="P:response to nutrient levels"/>
    <property type="evidence" value="ECO:0007669"/>
    <property type="project" value="TreeGrafter"/>
</dbReference>
<dbReference type="FunFam" id="1.20.1250.10:FF:000037">
    <property type="entry name" value="Prolactin"/>
    <property type="match status" value="1"/>
</dbReference>
<dbReference type="Gene3D" id="1.20.1250.10">
    <property type="match status" value="1"/>
</dbReference>
<dbReference type="InterPro" id="IPR009079">
    <property type="entry name" value="4_helix_cytokine-like_core"/>
</dbReference>
<dbReference type="InterPro" id="IPR001400">
    <property type="entry name" value="Somatotropin/Prolactin"/>
</dbReference>
<dbReference type="InterPro" id="IPR018116">
    <property type="entry name" value="Somatotropin_CS"/>
</dbReference>
<dbReference type="PANTHER" id="PTHR11417:SF5">
    <property type="entry name" value="PROLACTIN"/>
    <property type="match status" value="1"/>
</dbReference>
<dbReference type="PANTHER" id="PTHR11417">
    <property type="entry name" value="SOMATOTROPIN,PROLACTIN"/>
    <property type="match status" value="1"/>
</dbReference>
<dbReference type="Pfam" id="PF00103">
    <property type="entry name" value="Hormone_1"/>
    <property type="match status" value="1"/>
</dbReference>
<dbReference type="PRINTS" id="PR00836">
    <property type="entry name" value="SOMATOTROPIN"/>
</dbReference>
<dbReference type="SUPFAM" id="SSF47266">
    <property type="entry name" value="4-helical cytokines"/>
    <property type="match status" value="1"/>
</dbReference>
<dbReference type="PROSITE" id="PS00266">
    <property type="entry name" value="SOMATOTROPIN_1"/>
    <property type="match status" value="1"/>
</dbReference>
<dbReference type="PROSITE" id="PS00338">
    <property type="entry name" value="SOMATOTROPIN_2"/>
    <property type="match status" value="1"/>
</dbReference>
<evidence type="ECO:0000250" key="1"/>
<evidence type="ECO:0000305" key="2"/>
<comment type="subcellular location">
    <subcellularLocation>
        <location>Secreted</location>
    </subcellularLocation>
</comment>
<comment type="tissue specificity">
    <text>Pituitary gland.</text>
</comment>
<comment type="similarity">
    <text evidence="2">Belongs to the somatotropin/prolactin family.</text>
</comment>
<reference key="1">
    <citation type="journal article" date="1996" name="Biochim. Biophys. Acta">
        <title>Identification of two prolactin cDNA sequences from a goldfish pituitary cDNA library.</title>
        <authorList>
            <person name="Chan Y.H."/>
            <person name="Cheng K.W."/>
            <person name="Yu K.L."/>
            <person name="Chan K.M."/>
        </authorList>
    </citation>
    <scope>NUCLEOTIDE SEQUENCE [MRNA]</scope>
    <source>
        <tissue>Pituitary</tissue>
    </source>
</reference>
<protein>
    <recommendedName>
        <fullName>Prolactin</fullName>
        <shortName>PRL</shortName>
    </recommendedName>
</protein>
<accession>P87495</accession>
<gene>
    <name type="primary">prl1</name>
</gene>
<gene>
    <name type="primary">prl2</name>
</gene>
<feature type="signal peptide" evidence="1">
    <location>
        <begin position="1"/>
        <end position="23"/>
    </location>
</feature>
<feature type="chain" id="PRO_0000032932" description="Prolactin">
    <location>
        <begin position="24"/>
        <end position="210"/>
    </location>
</feature>
<feature type="disulfide bond" evidence="1">
    <location>
        <begin position="69"/>
        <end position="183"/>
    </location>
</feature>
<feature type="disulfide bond" evidence="1">
    <location>
        <begin position="200"/>
        <end position="210"/>
    </location>
</feature>